<gene>
    <name evidence="1" type="primary">pyrB</name>
    <name type="ordered locus">Cj1098</name>
</gene>
<name>PYRB_CAMJE</name>
<keyword id="KW-0665">Pyrimidine biosynthesis</keyword>
<keyword id="KW-1185">Reference proteome</keyword>
<keyword id="KW-0808">Transferase</keyword>
<organism>
    <name type="scientific">Campylobacter jejuni subsp. jejuni serotype O:2 (strain ATCC 700819 / NCTC 11168)</name>
    <dbReference type="NCBI Taxonomy" id="192222"/>
    <lineage>
        <taxon>Bacteria</taxon>
        <taxon>Pseudomonadati</taxon>
        <taxon>Campylobacterota</taxon>
        <taxon>Epsilonproteobacteria</taxon>
        <taxon>Campylobacterales</taxon>
        <taxon>Campylobacteraceae</taxon>
        <taxon>Campylobacter</taxon>
    </lineage>
</organism>
<feature type="chain" id="PRO_0000113114" description="Aspartate carbamoyltransferase catalytic subunit">
    <location>
        <begin position="1"/>
        <end position="295"/>
    </location>
</feature>
<feature type="binding site" evidence="1">
    <location>
        <position position="49"/>
    </location>
    <ligand>
        <name>carbamoyl phosphate</name>
        <dbReference type="ChEBI" id="CHEBI:58228"/>
    </ligand>
</feature>
<feature type="binding site" evidence="1">
    <location>
        <position position="50"/>
    </location>
    <ligand>
        <name>carbamoyl phosphate</name>
        <dbReference type="ChEBI" id="CHEBI:58228"/>
    </ligand>
</feature>
<feature type="binding site" evidence="1">
    <location>
        <position position="77"/>
    </location>
    <ligand>
        <name>L-aspartate</name>
        <dbReference type="ChEBI" id="CHEBI:29991"/>
    </ligand>
</feature>
<feature type="binding site" evidence="1">
    <location>
        <position position="99"/>
    </location>
    <ligand>
        <name>carbamoyl phosphate</name>
        <dbReference type="ChEBI" id="CHEBI:58228"/>
    </ligand>
</feature>
<feature type="binding site" evidence="1">
    <location>
        <position position="127"/>
    </location>
    <ligand>
        <name>carbamoyl phosphate</name>
        <dbReference type="ChEBI" id="CHEBI:58228"/>
    </ligand>
</feature>
<feature type="binding site" evidence="1">
    <location>
        <position position="130"/>
    </location>
    <ligand>
        <name>carbamoyl phosphate</name>
        <dbReference type="ChEBI" id="CHEBI:58228"/>
    </ligand>
</feature>
<feature type="binding site" evidence="1">
    <location>
        <position position="161"/>
    </location>
    <ligand>
        <name>L-aspartate</name>
        <dbReference type="ChEBI" id="CHEBI:29991"/>
    </ligand>
</feature>
<feature type="binding site" evidence="1">
    <location>
        <position position="212"/>
    </location>
    <ligand>
        <name>L-aspartate</name>
        <dbReference type="ChEBI" id="CHEBI:29991"/>
    </ligand>
</feature>
<feature type="binding site" evidence="1">
    <location>
        <position position="251"/>
    </location>
    <ligand>
        <name>carbamoyl phosphate</name>
        <dbReference type="ChEBI" id="CHEBI:58228"/>
    </ligand>
</feature>
<feature type="binding site" evidence="1">
    <location>
        <position position="252"/>
    </location>
    <ligand>
        <name>carbamoyl phosphate</name>
        <dbReference type="ChEBI" id="CHEBI:58228"/>
    </ligand>
</feature>
<accession>Q9PNJ6</accession>
<accession>Q0P9F6</accession>
<reference key="1">
    <citation type="journal article" date="2000" name="Nature">
        <title>The genome sequence of the food-borne pathogen Campylobacter jejuni reveals hypervariable sequences.</title>
        <authorList>
            <person name="Parkhill J."/>
            <person name="Wren B.W."/>
            <person name="Mungall K.L."/>
            <person name="Ketley J.M."/>
            <person name="Churcher C.M."/>
            <person name="Basham D."/>
            <person name="Chillingworth T."/>
            <person name="Davies R.M."/>
            <person name="Feltwell T."/>
            <person name="Holroyd S."/>
            <person name="Jagels K."/>
            <person name="Karlyshev A.V."/>
            <person name="Moule S."/>
            <person name="Pallen M.J."/>
            <person name="Penn C.W."/>
            <person name="Quail M.A."/>
            <person name="Rajandream M.A."/>
            <person name="Rutherford K.M."/>
            <person name="van Vliet A.H.M."/>
            <person name="Whitehead S."/>
            <person name="Barrell B.G."/>
        </authorList>
    </citation>
    <scope>NUCLEOTIDE SEQUENCE [LARGE SCALE GENOMIC DNA]</scope>
    <source>
        <strain>ATCC 700819 / NCTC 11168</strain>
    </source>
</reference>
<evidence type="ECO:0000255" key="1">
    <source>
        <dbReference type="HAMAP-Rule" id="MF_00001"/>
    </source>
</evidence>
<sequence length="295" mass="33133">MRHLITTKDFNKVEIMELFKEASDFLDEKPRTFLEGKSITTIFFENSTRTLSSFESAARRLGARVLRLDVSRSSSSKGETLYDTAANLDAMSPNAIVVRHANSGVPLILAKHMHCPVVNGGDGKHAHPTQALLDLFTIYNHFQGNVEGKKICIVGDIKNSRVAASNIELLSRFNLDITLVAPPHFMPNTHLKKHYKLDENIIANSDIIMSLRTQTERHNKTVYASLKDYANDFCIQKSLVKDKKLILLHPGPVNRNIDISDEMMSNERTLVLKQVKNGVAIRMAVLKKLILENEG</sequence>
<protein>
    <recommendedName>
        <fullName evidence="1">Aspartate carbamoyltransferase catalytic subunit</fullName>
        <ecNumber evidence="1">2.1.3.2</ecNumber>
    </recommendedName>
    <alternativeName>
        <fullName evidence="1">Aspartate transcarbamylase</fullName>
        <shortName evidence="1">ATCase</shortName>
    </alternativeName>
</protein>
<comment type="function">
    <text evidence="1">Catalyzes the condensation of carbamoyl phosphate and aspartate to form carbamoyl aspartate and inorganic phosphate, the committed step in the de novo pyrimidine nucleotide biosynthesis pathway.</text>
</comment>
<comment type="catalytic activity">
    <reaction evidence="1">
        <text>carbamoyl phosphate + L-aspartate = N-carbamoyl-L-aspartate + phosphate + H(+)</text>
        <dbReference type="Rhea" id="RHEA:20013"/>
        <dbReference type="ChEBI" id="CHEBI:15378"/>
        <dbReference type="ChEBI" id="CHEBI:29991"/>
        <dbReference type="ChEBI" id="CHEBI:32814"/>
        <dbReference type="ChEBI" id="CHEBI:43474"/>
        <dbReference type="ChEBI" id="CHEBI:58228"/>
        <dbReference type="EC" id="2.1.3.2"/>
    </reaction>
</comment>
<comment type="pathway">
    <text evidence="1">Pyrimidine metabolism; UMP biosynthesis via de novo pathway; (S)-dihydroorotate from bicarbonate: step 2/3.</text>
</comment>
<comment type="subunit">
    <text evidence="1">Heterododecamer (2C3:3R2) of six catalytic PyrB chains organized as two trimers (C3), and six regulatory PyrI chains organized as three dimers (R2).</text>
</comment>
<comment type="similarity">
    <text evidence="1">Belongs to the aspartate/ornithine carbamoyltransferase superfamily. ATCase family.</text>
</comment>
<proteinExistence type="inferred from homology"/>
<dbReference type="EC" id="2.1.3.2" evidence="1"/>
<dbReference type="EMBL" id="AL111168">
    <property type="protein sequence ID" value="CAL35215.1"/>
    <property type="molecule type" value="Genomic_DNA"/>
</dbReference>
<dbReference type="PIR" id="E81313">
    <property type="entry name" value="E81313"/>
</dbReference>
<dbReference type="RefSeq" id="WP_002852714.1">
    <property type="nucleotide sequence ID" value="NZ_SZUC01000001.1"/>
</dbReference>
<dbReference type="RefSeq" id="YP_002344491.1">
    <property type="nucleotide sequence ID" value="NC_002163.1"/>
</dbReference>
<dbReference type="SMR" id="Q9PNJ6"/>
<dbReference type="IntAct" id="Q9PNJ6">
    <property type="interactions" value="2"/>
</dbReference>
<dbReference type="STRING" id="192222.Cj1098"/>
<dbReference type="PaxDb" id="192222-Cj1098"/>
<dbReference type="EnsemblBacteria" id="CAL35215">
    <property type="protein sequence ID" value="CAL35215"/>
    <property type="gene ID" value="Cj1098"/>
</dbReference>
<dbReference type="GeneID" id="905389"/>
<dbReference type="KEGG" id="cje:Cj1098"/>
<dbReference type="PATRIC" id="fig|192222.6.peg.1080"/>
<dbReference type="eggNOG" id="COG0540">
    <property type="taxonomic scope" value="Bacteria"/>
</dbReference>
<dbReference type="HOGENOM" id="CLU_043846_2_0_7"/>
<dbReference type="OrthoDB" id="9774690at2"/>
<dbReference type="UniPathway" id="UPA00070">
    <property type="reaction ID" value="UER00116"/>
</dbReference>
<dbReference type="Proteomes" id="UP000000799">
    <property type="component" value="Chromosome"/>
</dbReference>
<dbReference type="GO" id="GO:0005829">
    <property type="term" value="C:cytosol"/>
    <property type="evidence" value="ECO:0007669"/>
    <property type="project" value="TreeGrafter"/>
</dbReference>
<dbReference type="GO" id="GO:0016597">
    <property type="term" value="F:amino acid binding"/>
    <property type="evidence" value="ECO:0007669"/>
    <property type="project" value="InterPro"/>
</dbReference>
<dbReference type="GO" id="GO:0004070">
    <property type="term" value="F:aspartate carbamoyltransferase activity"/>
    <property type="evidence" value="ECO:0007669"/>
    <property type="project" value="UniProtKB-UniRule"/>
</dbReference>
<dbReference type="GO" id="GO:0006207">
    <property type="term" value="P:'de novo' pyrimidine nucleobase biosynthetic process"/>
    <property type="evidence" value="ECO:0007669"/>
    <property type="project" value="InterPro"/>
</dbReference>
<dbReference type="GO" id="GO:0044205">
    <property type="term" value="P:'de novo' UMP biosynthetic process"/>
    <property type="evidence" value="ECO:0007669"/>
    <property type="project" value="UniProtKB-UniRule"/>
</dbReference>
<dbReference type="GO" id="GO:0006520">
    <property type="term" value="P:amino acid metabolic process"/>
    <property type="evidence" value="ECO:0007669"/>
    <property type="project" value="InterPro"/>
</dbReference>
<dbReference type="Gene3D" id="3.40.50.1370">
    <property type="entry name" value="Aspartate/ornithine carbamoyltransferase"/>
    <property type="match status" value="2"/>
</dbReference>
<dbReference type="HAMAP" id="MF_00001">
    <property type="entry name" value="Asp_carb_tr"/>
    <property type="match status" value="1"/>
</dbReference>
<dbReference type="InterPro" id="IPR006132">
    <property type="entry name" value="Asp/Orn_carbamoyltranf_P-bd"/>
</dbReference>
<dbReference type="InterPro" id="IPR006130">
    <property type="entry name" value="Asp/Orn_carbamoylTrfase"/>
</dbReference>
<dbReference type="InterPro" id="IPR036901">
    <property type="entry name" value="Asp/Orn_carbamoylTrfase_sf"/>
</dbReference>
<dbReference type="InterPro" id="IPR002082">
    <property type="entry name" value="Asp_carbamoyltransf"/>
</dbReference>
<dbReference type="InterPro" id="IPR006131">
    <property type="entry name" value="Asp_carbamoyltransf_Asp/Orn-bd"/>
</dbReference>
<dbReference type="NCBIfam" id="TIGR00670">
    <property type="entry name" value="asp_carb_tr"/>
    <property type="match status" value="1"/>
</dbReference>
<dbReference type="NCBIfam" id="NF002032">
    <property type="entry name" value="PRK00856.1"/>
    <property type="match status" value="1"/>
</dbReference>
<dbReference type="PANTHER" id="PTHR45753:SF6">
    <property type="entry name" value="ASPARTATE CARBAMOYLTRANSFERASE"/>
    <property type="match status" value="1"/>
</dbReference>
<dbReference type="PANTHER" id="PTHR45753">
    <property type="entry name" value="ORNITHINE CARBAMOYLTRANSFERASE, MITOCHONDRIAL"/>
    <property type="match status" value="1"/>
</dbReference>
<dbReference type="Pfam" id="PF00185">
    <property type="entry name" value="OTCace"/>
    <property type="match status" value="1"/>
</dbReference>
<dbReference type="Pfam" id="PF02729">
    <property type="entry name" value="OTCace_N"/>
    <property type="match status" value="1"/>
</dbReference>
<dbReference type="PRINTS" id="PR00100">
    <property type="entry name" value="AOTCASE"/>
</dbReference>
<dbReference type="PRINTS" id="PR00101">
    <property type="entry name" value="ATCASE"/>
</dbReference>
<dbReference type="SUPFAM" id="SSF53671">
    <property type="entry name" value="Aspartate/ornithine carbamoyltransferase"/>
    <property type="match status" value="1"/>
</dbReference>
<dbReference type="PROSITE" id="PS00097">
    <property type="entry name" value="CARBAMOYLTRANSFERASE"/>
    <property type="match status" value="1"/>
</dbReference>